<feature type="chain" id="PRO_1000067346" description="Anhydro-N-acetylmuramic acid kinase">
    <location>
        <begin position="1"/>
        <end position="369"/>
    </location>
</feature>
<feature type="binding site" evidence="1">
    <location>
        <begin position="12"/>
        <end position="19"/>
    </location>
    <ligand>
        <name>ATP</name>
        <dbReference type="ChEBI" id="CHEBI:30616"/>
    </ligand>
</feature>
<keyword id="KW-0067">ATP-binding</keyword>
<keyword id="KW-0119">Carbohydrate metabolism</keyword>
<keyword id="KW-0418">Kinase</keyword>
<keyword id="KW-0547">Nucleotide-binding</keyword>
<keyword id="KW-1185">Reference proteome</keyword>
<keyword id="KW-0808">Transferase</keyword>
<name>ANMK_ECOK1</name>
<proteinExistence type="inferred from homology"/>
<organism>
    <name type="scientific">Escherichia coli O1:K1 / APEC</name>
    <dbReference type="NCBI Taxonomy" id="405955"/>
    <lineage>
        <taxon>Bacteria</taxon>
        <taxon>Pseudomonadati</taxon>
        <taxon>Pseudomonadota</taxon>
        <taxon>Gammaproteobacteria</taxon>
        <taxon>Enterobacterales</taxon>
        <taxon>Enterobacteriaceae</taxon>
        <taxon>Escherichia</taxon>
    </lineage>
</organism>
<gene>
    <name evidence="1" type="primary">anmK</name>
    <name type="ordered locus">Ecok1_15310</name>
    <name type="ORF">APECO1_723</name>
</gene>
<reference key="1">
    <citation type="journal article" date="2007" name="J. Bacteriol.">
        <title>The genome sequence of avian pathogenic Escherichia coli strain O1:K1:H7 shares strong similarities with human extraintestinal pathogenic E. coli genomes.</title>
        <authorList>
            <person name="Johnson T.J."/>
            <person name="Kariyawasam S."/>
            <person name="Wannemuehler Y."/>
            <person name="Mangiamele P."/>
            <person name="Johnson S.J."/>
            <person name="Doetkott C."/>
            <person name="Skyberg J.A."/>
            <person name="Lynne A.M."/>
            <person name="Johnson J.R."/>
            <person name="Nolan L.K."/>
        </authorList>
    </citation>
    <scope>NUCLEOTIDE SEQUENCE [LARGE SCALE GENOMIC DNA]</scope>
</reference>
<dbReference type="EC" id="2.7.1.170" evidence="1"/>
<dbReference type="EMBL" id="CP000468">
    <property type="protein sequence ID" value="ABJ01025.1"/>
    <property type="molecule type" value="Genomic_DNA"/>
</dbReference>
<dbReference type="RefSeq" id="WP_000835069.1">
    <property type="nucleotide sequence ID" value="NZ_CADILS010000002.1"/>
</dbReference>
<dbReference type="SMR" id="A1ABI5"/>
<dbReference type="KEGG" id="ecv:APECO1_723"/>
<dbReference type="HOGENOM" id="CLU_038782_0_0_6"/>
<dbReference type="UniPathway" id="UPA00343"/>
<dbReference type="UniPathway" id="UPA00544"/>
<dbReference type="Proteomes" id="UP000008216">
    <property type="component" value="Chromosome"/>
</dbReference>
<dbReference type="GO" id="GO:0005524">
    <property type="term" value="F:ATP binding"/>
    <property type="evidence" value="ECO:0007669"/>
    <property type="project" value="UniProtKB-UniRule"/>
</dbReference>
<dbReference type="GO" id="GO:0016301">
    <property type="term" value="F:kinase activity"/>
    <property type="evidence" value="ECO:0007669"/>
    <property type="project" value="UniProtKB-KW"/>
</dbReference>
<dbReference type="GO" id="GO:0016773">
    <property type="term" value="F:phosphotransferase activity, alcohol group as acceptor"/>
    <property type="evidence" value="ECO:0007669"/>
    <property type="project" value="UniProtKB-UniRule"/>
</dbReference>
<dbReference type="GO" id="GO:0097175">
    <property type="term" value="P:1,6-anhydro-N-acetyl-beta-muramic acid catabolic process"/>
    <property type="evidence" value="ECO:0007669"/>
    <property type="project" value="UniProtKB-UniRule"/>
</dbReference>
<dbReference type="GO" id="GO:0006040">
    <property type="term" value="P:amino sugar metabolic process"/>
    <property type="evidence" value="ECO:0007669"/>
    <property type="project" value="InterPro"/>
</dbReference>
<dbReference type="GO" id="GO:0009254">
    <property type="term" value="P:peptidoglycan turnover"/>
    <property type="evidence" value="ECO:0007669"/>
    <property type="project" value="UniProtKB-UniRule"/>
</dbReference>
<dbReference type="CDD" id="cd24050">
    <property type="entry name" value="ASKHA_NBD_ANMK"/>
    <property type="match status" value="1"/>
</dbReference>
<dbReference type="FunFam" id="3.30.420.40:FF:000090">
    <property type="entry name" value="Anhydro-N-acetylmuramic acid kinase"/>
    <property type="match status" value="1"/>
</dbReference>
<dbReference type="Gene3D" id="3.30.420.40">
    <property type="match status" value="2"/>
</dbReference>
<dbReference type="HAMAP" id="MF_01270">
    <property type="entry name" value="AnhMurNAc_kinase"/>
    <property type="match status" value="1"/>
</dbReference>
<dbReference type="InterPro" id="IPR005338">
    <property type="entry name" value="Anhydro_N_Ac-Mur_kinase"/>
</dbReference>
<dbReference type="InterPro" id="IPR043129">
    <property type="entry name" value="ATPase_NBD"/>
</dbReference>
<dbReference type="NCBIfam" id="NF007138">
    <property type="entry name" value="PRK09585.1-1"/>
    <property type="match status" value="1"/>
</dbReference>
<dbReference type="NCBIfam" id="NF007139">
    <property type="entry name" value="PRK09585.1-3"/>
    <property type="match status" value="1"/>
</dbReference>
<dbReference type="NCBIfam" id="NF007148">
    <property type="entry name" value="PRK09585.3-2"/>
    <property type="match status" value="1"/>
</dbReference>
<dbReference type="PANTHER" id="PTHR30605">
    <property type="entry name" value="ANHYDRO-N-ACETYLMURAMIC ACID KINASE"/>
    <property type="match status" value="1"/>
</dbReference>
<dbReference type="PANTHER" id="PTHR30605:SF0">
    <property type="entry name" value="ANHYDRO-N-ACETYLMURAMIC ACID KINASE"/>
    <property type="match status" value="1"/>
</dbReference>
<dbReference type="Pfam" id="PF03702">
    <property type="entry name" value="AnmK"/>
    <property type="match status" value="1"/>
</dbReference>
<dbReference type="SUPFAM" id="SSF53067">
    <property type="entry name" value="Actin-like ATPase domain"/>
    <property type="match status" value="1"/>
</dbReference>
<comment type="function">
    <text evidence="1">Catalyzes the specific phosphorylation of 1,6-anhydro-N-acetylmuramic acid (anhMurNAc) with the simultaneous cleavage of the 1,6-anhydro ring, generating MurNAc-6-P. Is required for the utilization of anhMurNAc either imported from the medium or derived from its own cell wall murein, and thus plays a role in cell wall recycling.</text>
</comment>
<comment type="catalytic activity">
    <reaction evidence="1">
        <text>1,6-anhydro-N-acetyl-beta-muramate + ATP + H2O = N-acetyl-D-muramate 6-phosphate + ADP + H(+)</text>
        <dbReference type="Rhea" id="RHEA:24952"/>
        <dbReference type="ChEBI" id="CHEBI:15377"/>
        <dbReference type="ChEBI" id="CHEBI:15378"/>
        <dbReference type="ChEBI" id="CHEBI:30616"/>
        <dbReference type="ChEBI" id="CHEBI:58690"/>
        <dbReference type="ChEBI" id="CHEBI:58722"/>
        <dbReference type="ChEBI" id="CHEBI:456216"/>
        <dbReference type="EC" id="2.7.1.170"/>
    </reaction>
</comment>
<comment type="pathway">
    <text evidence="1">Amino-sugar metabolism; 1,6-anhydro-N-acetylmuramate degradation.</text>
</comment>
<comment type="pathway">
    <text evidence="1">Cell wall biogenesis; peptidoglycan recycling.</text>
</comment>
<comment type="similarity">
    <text evidence="1">Belongs to the anhydro-N-acetylmuramic acid kinase family.</text>
</comment>
<protein>
    <recommendedName>
        <fullName evidence="1">Anhydro-N-acetylmuramic acid kinase</fullName>
        <ecNumber evidence="1">2.7.1.170</ecNumber>
    </recommendedName>
    <alternativeName>
        <fullName evidence="1">AnhMurNAc kinase</fullName>
    </alternativeName>
</protein>
<sequence>MKSGRFIGVMSGTSLDGVDVVLATIDEHRVAQLASLSWPIPVSLKQAVLDICQGQQLTLSQFGQLDTQLGRLFADAVNALLKEQNLQARDIVAIGCHGQTVWHEPTGVAPHTLQIGDNNQIVARTGITVVGDFRRRDIALGGQGAPLVPAFHHALLAHPTERRMVLNIGGIANLSLLIPGQPVGGYDTGPGNMLMDAWIWRQAGKPYDKDAEWARAGKVILPLLQNMLSDPYFSQPAPKSTGREYFNYGWLERHLRHFPGVDPRDVQATLAELTAVTISEQVLLSGGCERLMVCGGGGRNPLLMARLAALLPGTEVTTTDAVGISGDDMEALAFAWLAWRTLAGLPGNLPSVTGASQETVLGAIFPANP</sequence>
<evidence type="ECO:0000255" key="1">
    <source>
        <dbReference type="HAMAP-Rule" id="MF_01270"/>
    </source>
</evidence>
<accession>A1ABI5</accession>